<accession>A4W9A3</accession>
<keyword id="KW-0687">Ribonucleoprotein</keyword>
<keyword id="KW-0689">Ribosomal protein</keyword>
<comment type="similarity">
    <text evidence="1">Belongs to the bacterial ribosomal protein bL32 family.</text>
</comment>
<dbReference type="EMBL" id="CP000653">
    <property type="protein sequence ID" value="ABP60283.1"/>
    <property type="molecule type" value="Genomic_DNA"/>
</dbReference>
<dbReference type="RefSeq" id="WP_012017000.1">
    <property type="nucleotide sequence ID" value="NC_009436.1"/>
</dbReference>
<dbReference type="SMR" id="A4W9A3"/>
<dbReference type="STRING" id="399742.Ent638_1604"/>
<dbReference type="KEGG" id="ent:Ent638_1604"/>
<dbReference type="eggNOG" id="COG0333">
    <property type="taxonomic scope" value="Bacteria"/>
</dbReference>
<dbReference type="HOGENOM" id="CLU_129084_2_1_6"/>
<dbReference type="OrthoDB" id="9801927at2"/>
<dbReference type="Proteomes" id="UP000000230">
    <property type="component" value="Chromosome"/>
</dbReference>
<dbReference type="GO" id="GO:0015934">
    <property type="term" value="C:large ribosomal subunit"/>
    <property type="evidence" value="ECO:0007669"/>
    <property type="project" value="InterPro"/>
</dbReference>
<dbReference type="GO" id="GO:0003735">
    <property type="term" value="F:structural constituent of ribosome"/>
    <property type="evidence" value="ECO:0007669"/>
    <property type="project" value="InterPro"/>
</dbReference>
<dbReference type="GO" id="GO:0006412">
    <property type="term" value="P:translation"/>
    <property type="evidence" value="ECO:0007669"/>
    <property type="project" value="UniProtKB-UniRule"/>
</dbReference>
<dbReference type="HAMAP" id="MF_00340">
    <property type="entry name" value="Ribosomal_bL32"/>
    <property type="match status" value="1"/>
</dbReference>
<dbReference type="InterPro" id="IPR002677">
    <property type="entry name" value="Ribosomal_bL32"/>
</dbReference>
<dbReference type="InterPro" id="IPR044957">
    <property type="entry name" value="Ribosomal_bL32_bact"/>
</dbReference>
<dbReference type="InterPro" id="IPR011332">
    <property type="entry name" value="Ribosomal_zn-bd"/>
</dbReference>
<dbReference type="NCBIfam" id="TIGR01031">
    <property type="entry name" value="rpmF_bact"/>
    <property type="match status" value="1"/>
</dbReference>
<dbReference type="PANTHER" id="PTHR35534">
    <property type="entry name" value="50S RIBOSOMAL PROTEIN L32"/>
    <property type="match status" value="1"/>
</dbReference>
<dbReference type="PANTHER" id="PTHR35534:SF1">
    <property type="entry name" value="LARGE RIBOSOMAL SUBUNIT PROTEIN BL32"/>
    <property type="match status" value="1"/>
</dbReference>
<dbReference type="Pfam" id="PF01783">
    <property type="entry name" value="Ribosomal_L32p"/>
    <property type="match status" value="1"/>
</dbReference>
<dbReference type="SUPFAM" id="SSF57829">
    <property type="entry name" value="Zn-binding ribosomal proteins"/>
    <property type="match status" value="1"/>
</dbReference>
<sequence length="57" mass="6460">MAVQQNKPTRSKRGMRRSHDALTAVTSLSVDQTSGEKHLRHHITADGFYRGRKVITK</sequence>
<feature type="chain" id="PRO_1000059820" description="Large ribosomal subunit protein bL32">
    <location>
        <begin position="1"/>
        <end position="57"/>
    </location>
</feature>
<feature type="region of interest" description="Disordered" evidence="2">
    <location>
        <begin position="1"/>
        <end position="38"/>
    </location>
</feature>
<feature type="compositionally biased region" description="Polar residues" evidence="2">
    <location>
        <begin position="24"/>
        <end position="33"/>
    </location>
</feature>
<organism>
    <name type="scientific">Enterobacter sp. (strain 638)</name>
    <dbReference type="NCBI Taxonomy" id="399742"/>
    <lineage>
        <taxon>Bacteria</taxon>
        <taxon>Pseudomonadati</taxon>
        <taxon>Pseudomonadota</taxon>
        <taxon>Gammaproteobacteria</taxon>
        <taxon>Enterobacterales</taxon>
        <taxon>Enterobacteriaceae</taxon>
        <taxon>Enterobacter</taxon>
    </lineage>
</organism>
<reference key="1">
    <citation type="journal article" date="2010" name="PLoS Genet.">
        <title>Genome sequence of the plant growth promoting endophytic bacterium Enterobacter sp. 638.</title>
        <authorList>
            <person name="Taghavi S."/>
            <person name="van der Lelie D."/>
            <person name="Hoffman A."/>
            <person name="Zhang Y.B."/>
            <person name="Walla M.D."/>
            <person name="Vangronsveld J."/>
            <person name="Newman L."/>
            <person name="Monchy S."/>
        </authorList>
    </citation>
    <scope>NUCLEOTIDE SEQUENCE [LARGE SCALE GENOMIC DNA]</scope>
    <source>
        <strain>638</strain>
    </source>
</reference>
<protein>
    <recommendedName>
        <fullName evidence="1">Large ribosomal subunit protein bL32</fullName>
    </recommendedName>
    <alternativeName>
        <fullName evidence="3">50S ribosomal protein L32</fullName>
    </alternativeName>
</protein>
<proteinExistence type="inferred from homology"/>
<name>RL32_ENT38</name>
<evidence type="ECO:0000255" key="1">
    <source>
        <dbReference type="HAMAP-Rule" id="MF_00340"/>
    </source>
</evidence>
<evidence type="ECO:0000256" key="2">
    <source>
        <dbReference type="SAM" id="MobiDB-lite"/>
    </source>
</evidence>
<evidence type="ECO:0000305" key="3"/>
<gene>
    <name evidence="1" type="primary">rpmF</name>
    <name type="ordered locus">Ent638_1604</name>
</gene>